<feature type="chain" id="PRO_0000158655" description="Succinate dehydrogenase flavoprotein subunit">
    <location>
        <begin position="1"/>
        <end position="600"/>
    </location>
</feature>
<feature type="active site" description="Proton acceptor" evidence="1">
    <location>
        <position position="289"/>
    </location>
</feature>
<feature type="binding site" evidence="1">
    <location>
        <begin position="17"/>
        <end position="22"/>
    </location>
    <ligand>
        <name>FAD</name>
        <dbReference type="ChEBI" id="CHEBI:57692"/>
    </ligand>
</feature>
<feature type="binding site" evidence="1">
    <location>
        <begin position="40"/>
        <end position="55"/>
    </location>
    <ligand>
        <name>FAD</name>
        <dbReference type="ChEBI" id="CHEBI:57692"/>
    </ligand>
</feature>
<feature type="binding site" evidence="1">
    <location>
        <position position="224"/>
    </location>
    <ligand>
        <name>FAD</name>
        <dbReference type="ChEBI" id="CHEBI:57692"/>
    </ligand>
</feature>
<feature type="binding site" evidence="1">
    <location>
        <position position="245"/>
    </location>
    <ligand>
        <name>substrate</name>
    </ligand>
</feature>
<feature type="binding site" evidence="1">
    <location>
        <position position="257"/>
    </location>
    <ligand>
        <name>substrate</name>
    </ligand>
</feature>
<feature type="binding site" evidence="1">
    <location>
        <position position="356"/>
    </location>
    <ligand>
        <name>substrate</name>
    </ligand>
</feature>
<feature type="binding site" evidence="1">
    <location>
        <position position="390"/>
    </location>
    <ligand>
        <name>FAD</name>
        <dbReference type="ChEBI" id="CHEBI:57692"/>
    </ligand>
</feature>
<feature type="binding site" evidence="1">
    <location>
        <position position="401"/>
    </location>
    <ligand>
        <name>substrate</name>
    </ligand>
</feature>
<feature type="binding site" evidence="1">
    <location>
        <begin position="406"/>
        <end position="407"/>
    </location>
    <ligand>
        <name>FAD</name>
        <dbReference type="ChEBI" id="CHEBI:57692"/>
    </ligand>
</feature>
<feature type="modified residue" description="Tele-8alpha-FAD histidine" evidence="1">
    <location>
        <position position="48"/>
    </location>
</feature>
<reference key="1">
    <citation type="submission" date="1995-09" db="EMBL/GenBank/DDBJ databases">
        <title>Cloning, sequencing, and expression of the succinate-ubiquinone oxidoreductase (SdhCDAB) operon from Paracoccus denitrificans.</title>
        <authorList>
            <person name="Dickins M.A."/>
            <person name="Dhawan T."/>
            <person name="Gunsalus R.P."/>
            <person name="Schroeder I."/>
            <person name="Cecchini G."/>
        </authorList>
    </citation>
    <scope>NUCLEOTIDE SEQUENCE [GENOMIC DNA]</scope>
    <source>
        <strain>ATCC 13543 / NRRL B-3784 / NRC 449</strain>
    </source>
</reference>
<protein>
    <recommendedName>
        <fullName>Succinate dehydrogenase flavoprotein subunit</fullName>
        <ecNumber evidence="1">1.3.5.1</ecNumber>
    </recommendedName>
</protein>
<sequence>MAAYKYETHEYDVVVVGAGGAGLRATLGMAEQGLRTACVTKVFPTRSHTVAAQGGIAASLSNMGPDNWQWHMYDTVKGSDWLGDTDAMEYLAREAPKAVYELEHYGVPFSRTEEGKIYQRPFGGHTTEFGEGPPVQRTCAAADRTGHAILHTLYGQSLKEKAEFFIEYFALDLIITDGACTGVVCWKLDDGTIHVFNAKMVVLATGGYGRAYFSATSAHTCTGDGGGMVARAGLPLQDMEFVQFHPTGIYGSGCLITEGARGEGGYLTNSEGERFMERYAPTYKDLASRDVVSRCITIEIREGRGVGPHKDHMHLNLMHLPPESLAERLPGISESAKIFAGVDVTREPIPILPTVHYNMGGIPTNYWGEVLNPTQDNPDQVFPGLMAVGEAGCASVHGANRLGSNSLIDLVVFGRAAAIRAGQVIDREAQIPTTNKEQVDKALDRFDRIRNADGSVSTADLRLEMQRTMQADAAVFRTDKTLAEGVDKMRVIAGKLSDLKVTDRSLIWNSDLMETLELTNLMPNALATIVAAEARKESRGAHAHEDYPERDDANWRKHSLAWIEGNDVKLAYRPVHLEPLTRQDEGGIDLKKIAPKARVY</sequence>
<accession>Q59661</accession>
<comment type="catalytic activity">
    <reaction evidence="1">
        <text>a quinone + succinate = fumarate + a quinol</text>
        <dbReference type="Rhea" id="RHEA:40523"/>
        <dbReference type="ChEBI" id="CHEBI:24646"/>
        <dbReference type="ChEBI" id="CHEBI:29806"/>
        <dbReference type="ChEBI" id="CHEBI:30031"/>
        <dbReference type="ChEBI" id="CHEBI:132124"/>
        <dbReference type="EC" id="1.3.5.1"/>
    </reaction>
</comment>
<comment type="cofactor">
    <cofactor evidence="1">
        <name>FAD</name>
        <dbReference type="ChEBI" id="CHEBI:57692"/>
    </cofactor>
</comment>
<comment type="pathway">
    <text evidence="1">Carbohydrate metabolism; tricarboxylic acid cycle; fumarate from succinate (bacterial route): step 1/1.</text>
</comment>
<comment type="subunit">
    <text evidence="1">Part of an enzyme complex containing four subunits: a flavoprotein, an iron-sulfur, cytochrome b-556, and a hydrophobic anchor protein.</text>
</comment>
<comment type="subcellular location">
    <subcellularLocation>
        <location evidence="1">Cell inner membrane</location>
        <topology evidence="1">Peripheral membrane protein</topology>
        <orientation evidence="1">Cytoplasmic side</orientation>
    </subcellularLocation>
</comment>
<comment type="similarity">
    <text evidence="2">Belongs to the FAD-dependent oxidoreductase 2 family. FRD/SDH subfamily.</text>
</comment>
<dbReference type="EC" id="1.3.5.1" evidence="1"/>
<dbReference type="EMBL" id="U31902">
    <property type="protein sequence ID" value="AAA75177.1"/>
    <property type="molecule type" value="Genomic_DNA"/>
</dbReference>
<dbReference type="PIR" id="T46880">
    <property type="entry name" value="T46880"/>
</dbReference>
<dbReference type="RefSeq" id="WP_011746914.1">
    <property type="nucleotide sequence ID" value="NZ_PPGA01000002.1"/>
</dbReference>
<dbReference type="SMR" id="Q59661"/>
<dbReference type="GeneID" id="93451794"/>
<dbReference type="OMA" id="PTGIWRM"/>
<dbReference type="UniPathway" id="UPA00223">
    <property type="reaction ID" value="UER01005"/>
</dbReference>
<dbReference type="GO" id="GO:0005886">
    <property type="term" value="C:plasma membrane"/>
    <property type="evidence" value="ECO:0007669"/>
    <property type="project" value="UniProtKB-SubCell"/>
</dbReference>
<dbReference type="GO" id="GO:0009055">
    <property type="term" value="F:electron transfer activity"/>
    <property type="evidence" value="ECO:0007669"/>
    <property type="project" value="TreeGrafter"/>
</dbReference>
<dbReference type="GO" id="GO:0050660">
    <property type="term" value="F:flavin adenine dinucleotide binding"/>
    <property type="evidence" value="ECO:0007669"/>
    <property type="project" value="InterPro"/>
</dbReference>
<dbReference type="GO" id="GO:0008177">
    <property type="term" value="F:succinate dehydrogenase (quinone) activity"/>
    <property type="evidence" value="ECO:0007669"/>
    <property type="project" value="UniProtKB-EC"/>
</dbReference>
<dbReference type="GO" id="GO:0009061">
    <property type="term" value="P:anaerobic respiration"/>
    <property type="evidence" value="ECO:0007669"/>
    <property type="project" value="TreeGrafter"/>
</dbReference>
<dbReference type="GO" id="GO:0022900">
    <property type="term" value="P:electron transport chain"/>
    <property type="evidence" value="ECO:0007669"/>
    <property type="project" value="InterPro"/>
</dbReference>
<dbReference type="GO" id="GO:0006099">
    <property type="term" value="P:tricarboxylic acid cycle"/>
    <property type="evidence" value="ECO:0007669"/>
    <property type="project" value="UniProtKB-UniPathway"/>
</dbReference>
<dbReference type="FunFam" id="3.90.700.10:FF:000001">
    <property type="entry name" value="Mitochondrial succinate dehydrogenase flavoprotein subunit"/>
    <property type="match status" value="1"/>
</dbReference>
<dbReference type="FunFam" id="4.10.80.40:FF:000002">
    <property type="entry name" value="Succinate dehydrogenase [ubiquinone] flavoprotein subunit, mitochondrial"/>
    <property type="match status" value="1"/>
</dbReference>
<dbReference type="FunFam" id="3.50.50.60:FF:000026">
    <property type="entry name" value="Succinate dehydrogenase flavoprotein subunit"/>
    <property type="match status" value="1"/>
</dbReference>
<dbReference type="FunFam" id="1.20.58.100:FF:000001">
    <property type="entry name" value="Succinate dehydrogenase flavoprotein subunit (SdhA)"/>
    <property type="match status" value="1"/>
</dbReference>
<dbReference type="Gene3D" id="3.50.50.60">
    <property type="entry name" value="FAD/NAD(P)-binding domain"/>
    <property type="match status" value="1"/>
</dbReference>
<dbReference type="Gene3D" id="1.20.58.100">
    <property type="entry name" value="Fumarate reductase/succinate dehydrogenase flavoprotein-like, C-terminal domain"/>
    <property type="match status" value="1"/>
</dbReference>
<dbReference type="Gene3D" id="4.10.80.40">
    <property type="entry name" value="succinate dehydrogenase protein domain"/>
    <property type="match status" value="1"/>
</dbReference>
<dbReference type="Gene3D" id="3.90.700.10">
    <property type="entry name" value="Succinate dehydrogenase/fumarate reductase flavoprotein, catalytic domain"/>
    <property type="match status" value="1"/>
</dbReference>
<dbReference type="InterPro" id="IPR003953">
    <property type="entry name" value="FAD-dep_OxRdtase_2_FAD-bd"/>
</dbReference>
<dbReference type="InterPro" id="IPR036188">
    <property type="entry name" value="FAD/NAD-bd_sf"/>
</dbReference>
<dbReference type="InterPro" id="IPR003952">
    <property type="entry name" value="FRD_SDH_FAD_BS"/>
</dbReference>
<dbReference type="InterPro" id="IPR037099">
    <property type="entry name" value="Fum_R/Succ_DH_flav-like_C_sf"/>
</dbReference>
<dbReference type="InterPro" id="IPR015939">
    <property type="entry name" value="Fum_Rdtase/Succ_DH_flav-like_C"/>
</dbReference>
<dbReference type="InterPro" id="IPR030664">
    <property type="entry name" value="SdhA/FrdA/AprA"/>
</dbReference>
<dbReference type="InterPro" id="IPR027477">
    <property type="entry name" value="Succ_DH/fumarate_Rdtase_cat_sf"/>
</dbReference>
<dbReference type="InterPro" id="IPR011281">
    <property type="entry name" value="Succ_DH_flav_su_fwd"/>
</dbReference>
<dbReference type="InterPro" id="IPR014006">
    <property type="entry name" value="Succ_Dhase_FrdA_Gneg"/>
</dbReference>
<dbReference type="NCBIfam" id="TIGR01816">
    <property type="entry name" value="sdhA_forward"/>
    <property type="match status" value="1"/>
</dbReference>
<dbReference type="NCBIfam" id="TIGR01812">
    <property type="entry name" value="sdhA_frdA_Gneg"/>
    <property type="match status" value="1"/>
</dbReference>
<dbReference type="PANTHER" id="PTHR11632">
    <property type="entry name" value="SUCCINATE DEHYDROGENASE 2 FLAVOPROTEIN SUBUNIT"/>
    <property type="match status" value="1"/>
</dbReference>
<dbReference type="PANTHER" id="PTHR11632:SF51">
    <property type="entry name" value="SUCCINATE DEHYDROGENASE [UBIQUINONE] FLAVOPROTEIN SUBUNIT, MITOCHONDRIAL"/>
    <property type="match status" value="1"/>
</dbReference>
<dbReference type="Pfam" id="PF00890">
    <property type="entry name" value="FAD_binding_2"/>
    <property type="match status" value="1"/>
</dbReference>
<dbReference type="Pfam" id="PF02910">
    <property type="entry name" value="Succ_DH_flav_C"/>
    <property type="match status" value="1"/>
</dbReference>
<dbReference type="PIRSF" id="PIRSF000171">
    <property type="entry name" value="SDHA_APRA_LASPO"/>
    <property type="match status" value="1"/>
</dbReference>
<dbReference type="SUPFAM" id="SSF51905">
    <property type="entry name" value="FAD/NAD(P)-binding domain"/>
    <property type="match status" value="1"/>
</dbReference>
<dbReference type="SUPFAM" id="SSF46977">
    <property type="entry name" value="Succinate dehydrogenase/fumarate reductase flavoprotein C-terminal domain"/>
    <property type="match status" value="1"/>
</dbReference>
<dbReference type="SUPFAM" id="SSF56425">
    <property type="entry name" value="Succinate dehydrogenase/fumarate reductase flavoprotein, catalytic domain"/>
    <property type="match status" value="1"/>
</dbReference>
<dbReference type="PROSITE" id="PS00504">
    <property type="entry name" value="FRD_SDH_FAD_BINDING"/>
    <property type="match status" value="1"/>
</dbReference>
<name>SDHA_PARDE</name>
<keyword id="KW-0997">Cell inner membrane</keyword>
<keyword id="KW-1003">Cell membrane</keyword>
<keyword id="KW-0249">Electron transport</keyword>
<keyword id="KW-0274">FAD</keyword>
<keyword id="KW-0285">Flavoprotein</keyword>
<keyword id="KW-0472">Membrane</keyword>
<keyword id="KW-0560">Oxidoreductase</keyword>
<keyword id="KW-0813">Transport</keyword>
<keyword id="KW-0816">Tricarboxylic acid cycle</keyword>
<gene>
    <name type="primary">sdhA</name>
</gene>
<organism>
    <name type="scientific">Paracoccus denitrificans</name>
    <dbReference type="NCBI Taxonomy" id="266"/>
    <lineage>
        <taxon>Bacteria</taxon>
        <taxon>Pseudomonadati</taxon>
        <taxon>Pseudomonadota</taxon>
        <taxon>Alphaproteobacteria</taxon>
        <taxon>Rhodobacterales</taxon>
        <taxon>Paracoccaceae</taxon>
        <taxon>Paracoccus</taxon>
    </lineage>
</organism>
<evidence type="ECO:0000250" key="1">
    <source>
        <dbReference type="UniProtKB" id="P0AC41"/>
    </source>
</evidence>
<evidence type="ECO:0000305" key="2"/>
<proteinExistence type="inferred from homology"/>